<comment type="function">
    <text evidence="4">Involved in nitrogen metabolism via ammonium assimilation. Catalyzes the ATP-dependent biosynthesis of glutamine from glutamate and ammonia. Also plays a key role in controlling the ammonia levels within infected host cells and so contributes to the pathogens capacity to inhibit phagosome acidification and phagosome-lysosome fusion. Involved in cell wall biosynthesis via the production of the major component poly-L-glutamine (PLG). PLG synthesis in the cell wall occurs only in nitrogen limiting conditions and on the contrary high nitrogen conditions inhibit PLG synthesis.</text>
</comment>
<comment type="catalytic activity">
    <reaction evidence="4">
        <text>L-glutamate + NH4(+) + ATP = L-glutamine + ADP + phosphate + H(+)</text>
        <dbReference type="Rhea" id="RHEA:16169"/>
        <dbReference type="ChEBI" id="CHEBI:15378"/>
        <dbReference type="ChEBI" id="CHEBI:28938"/>
        <dbReference type="ChEBI" id="CHEBI:29985"/>
        <dbReference type="ChEBI" id="CHEBI:30616"/>
        <dbReference type="ChEBI" id="CHEBI:43474"/>
        <dbReference type="ChEBI" id="CHEBI:58359"/>
        <dbReference type="ChEBI" id="CHEBI:456216"/>
        <dbReference type="EC" id="6.3.1.2"/>
    </reaction>
</comment>
<comment type="cofactor">
    <cofactor evidence="4">
        <name>Mg(2+)</name>
        <dbReference type="ChEBI" id="CHEBI:18420"/>
    </cofactor>
    <text evidence="4">Binds 2 Mg(2+) ions per subunit.</text>
</comment>
<comment type="activity regulation">
    <text evidence="4">When cellular nitrogen levels are high, the C-terminal adenylyl transferase (AT) of GlnE inhibits GlnA by covalent transfer of an adenylyl group from ATP to Tyr-406. Conversely, when nitrogen levels are low, the N-terminal adenylyl removase (AR) of GlnE activates GlnA by removing the adenylyl group by phosphorolysis. The fully adenylated enzyme complex is inactive.</text>
</comment>
<comment type="subunit">
    <text evidence="4">Oligomer of 12 subunits arranged in the form of two hexagons.</text>
</comment>
<comment type="subcellular location">
    <subcellularLocation>
        <location evidence="4">Cytoplasm</location>
    </subcellularLocation>
</comment>
<comment type="similarity">
    <text evidence="4">Belongs to the glutamine synthetase family.</text>
</comment>
<keyword id="KW-0067">ATP-binding</keyword>
<keyword id="KW-0963">Cytoplasm</keyword>
<keyword id="KW-0436">Ligase</keyword>
<keyword id="KW-0460">Magnesium</keyword>
<keyword id="KW-0479">Metal-binding</keyword>
<keyword id="KW-0547">Nucleotide-binding</keyword>
<keyword id="KW-0597">Phosphoprotein</keyword>
<keyword id="KW-1185">Reference proteome</keyword>
<keyword id="KW-0843">Virulence</keyword>
<evidence type="ECO:0000250" key="1">
    <source>
        <dbReference type="UniProtKB" id="P0A1P6"/>
    </source>
</evidence>
<evidence type="ECO:0000250" key="2">
    <source>
        <dbReference type="UniProtKB" id="P12425"/>
    </source>
</evidence>
<evidence type="ECO:0000250" key="3">
    <source>
        <dbReference type="UniProtKB" id="P77961"/>
    </source>
</evidence>
<evidence type="ECO:0000250" key="4">
    <source>
        <dbReference type="UniProtKB" id="P9WN39"/>
    </source>
</evidence>
<evidence type="ECO:0000255" key="5">
    <source>
        <dbReference type="PROSITE-ProRule" id="PRU01330"/>
    </source>
</evidence>
<evidence type="ECO:0000255" key="6">
    <source>
        <dbReference type="PROSITE-ProRule" id="PRU01331"/>
    </source>
</evidence>
<protein>
    <recommendedName>
        <fullName evidence="4">Glutamine synthetase</fullName>
        <shortName evidence="4">GS</shortName>
        <ecNumber evidence="4">6.3.1.2</ecNumber>
    </recommendedName>
    <alternativeName>
        <fullName evidence="4">Glutamate--ammonia ligase</fullName>
    </alternativeName>
    <alternativeName>
        <fullName evidence="4">Glutamine synthetase I beta</fullName>
        <shortName evidence="4">GSI beta</shortName>
    </alternativeName>
</protein>
<gene>
    <name evidence="4" type="primary">glnA1</name>
    <name type="synonym">glnA</name>
    <name type="ordered locus">MT2278</name>
</gene>
<proteinExistence type="inferred from homology"/>
<sequence length="478" mass="53570">MTEKTPDDVFKLAKDEKVEYVDVRFCDLPGIMQHFTIPASAFDKSVFDDGLAFDGSSIRGFQSIHESDMLLLPDPETARIDPFRAAKTLNINFFVHDPFTLEPYSRDPRNIARKAENYLISTGIADTAYFGAEAEFYIFDSVSFDSRANGSFYEVDAISGWWNTGAATEADGSPNRGYKVRHKGGYFPVAPNDQYVDLRDKMLTNLINSGFILEKGHHEVGSGGQAEINYQFNSLLHAADDMQLYKYIIKNTAWQNGKTVTFMPKPLFGDNGSGMHCHQSLWKDGAPLMYDETGYAGLSDTARHYIGGLLHHAPSLLAFTNPTVNSYKRLVPGYEAPINLVYSQRNRSACVRIPITGSNPKAKRLEFRSPDSSGNPYLAFSAMLMAGLDGIKNKIEPQAPVDKDLYELPPEEAASIPQTPTQLSDVIDRLEADHEYLTEGGVFTNDLIETWISFKRENEIEPVNIRPHPYEFALYYDV</sequence>
<organism>
    <name type="scientific">Mycobacterium tuberculosis (strain CDC 1551 / Oshkosh)</name>
    <dbReference type="NCBI Taxonomy" id="83331"/>
    <lineage>
        <taxon>Bacteria</taxon>
        <taxon>Bacillati</taxon>
        <taxon>Actinomycetota</taxon>
        <taxon>Actinomycetes</taxon>
        <taxon>Mycobacteriales</taxon>
        <taxon>Mycobacteriaceae</taxon>
        <taxon>Mycobacterium</taxon>
        <taxon>Mycobacterium tuberculosis complex</taxon>
    </lineage>
</organism>
<name>GLN1B_MYCTO</name>
<feature type="chain" id="PRO_0000427194" description="Glutamine synthetase">
    <location>
        <begin position="1"/>
        <end position="478"/>
    </location>
</feature>
<feature type="domain" description="GS beta-grasp" evidence="5">
    <location>
        <begin position="16"/>
        <end position="100"/>
    </location>
</feature>
<feature type="domain" description="GS catalytic" evidence="6">
    <location>
        <begin position="108"/>
        <end position="478"/>
    </location>
</feature>
<feature type="binding site" evidence="4">
    <location>
        <position position="133"/>
    </location>
    <ligand>
        <name>Mg(2+)</name>
        <dbReference type="ChEBI" id="CHEBI:18420"/>
        <label>1</label>
    </ligand>
</feature>
<feature type="binding site" evidence="4">
    <location>
        <position position="135"/>
    </location>
    <ligand>
        <name>Mg(2+)</name>
        <dbReference type="ChEBI" id="CHEBI:18420"/>
        <label>2</label>
    </ligand>
</feature>
<feature type="binding site" evidence="4">
    <location>
        <position position="214"/>
    </location>
    <ligand>
        <name>ATP</name>
        <dbReference type="ChEBI" id="CHEBI:30616"/>
    </ligand>
</feature>
<feature type="binding site" evidence="4">
    <location>
        <position position="219"/>
    </location>
    <ligand>
        <name>Mg(2+)</name>
        <dbReference type="ChEBI" id="CHEBI:18420"/>
        <label>2</label>
    </ligand>
</feature>
<feature type="binding site" evidence="4">
    <location>
        <position position="227"/>
    </location>
    <ligand>
        <name>Mg(2+)</name>
        <dbReference type="ChEBI" id="CHEBI:18420"/>
        <label>2</label>
    </ligand>
</feature>
<feature type="binding site" evidence="4">
    <location>
        <begin position="230"/>
        <end position="232"/>
    </location>
    <ligand>
        <name>ATP</name>
        <dbReference type="ChEBI" id="CHEBI:30616"/>
    </ligand>
</feature>
<feature type="binding site" evidence="4">
    <location>
        <begin position="271"/>
        <end position="272"/>
    </location>
    <ligand>
        <name>L-glutamate</name>
        <dbReference type="ChEBI" id="CHEBI:29985"/>
    </ligand>
</feature>
<feature type="binding site" evidence="2">
    <location>
        <position position="272"/>
    </location>
    <ligand>
        <name>L-glutamate</name>
        <dbReference type="ChEBI" id="CHEBI:29985"/>
    </ligand>
</feature>
<feature type="binding site" evidence="4">
    <location>
        <position position="276"/>
    </location>
    <ligand>
        <name>Mg(2+)</name>
        <dbReference type="ChEBI" id="CHEBI:18420"/>
        <label>1</label>
    </ligand>
</feature>
<feature type="binding site" evidence="4">
    <location>
        <begin position="278"/>
        <end position="280"/>
    </location>
    <ligand>
        <name>ATP</name>
        <dbReference type="ChEBI" id="CHEBI:30616"/>
    </ligand>
</feature>
<feature type="binding site" evidence="3">
    <location>
        <position position="280"/>
    </location>
    <ligand>
        <name>ATP</name>
        <dbReference type="ChEBI" id="CHEBI:30616"/>
    </ligand>
</feature>
<feature type="binding site" evidence="4">
    <location>
        <position position="329"/>
    </location>
    <ligand>
        <name>L-glutamate</name>
        <dbReference type="ChEBI" id="CHEBI:29985"/>
    </ligand>
</feature>
<feature type="binding site" evidence="1">
    <location>
        <position position="335"/>
    </location>
    <ligand>
        <name>L-glutamate</name>
        <dbReference type="ChEBI" id="CHEBI:29985"/>
    </ligand>
</feature>
<feature type="binding site" evidence="4">
    <location>
        <position position="347"/>
    </location>
    <ligand>
        <name>ATP</name>
        <dbReference type="ChEBI" id="CHEBI:30616"/>
    </ligand>
</feature>
<feature type="binding site" evidence="4">
    <location>
        <position position="347"/>
    </location>
    <ligand>
        <name>L-glutamate</name>
        <dbReference type="ChEBI" id="CHEBI:29985"/>
    </ligand>
</feature>
<feature type="binding site" evidence="4">
    <location>
        <position position="352"/>
    </location>
    <ligand>
        <name>ATP</name>
        <dbReference type="ChEBI" id="CHEBI:30616"/>
    </ligand>
</feature>
<feature type="binding site" evidence="3">
    <location>
        <position position="361"/>
    </location>
    <ligand>
        <name>ATP</name>
        <dbReference type="ChEBI" id="CHEBI:30616"/>
    </ligand>
</feature>
<feature type="binding site" evidence="4">
    <location>
        <position position="366"/>
    </location>
    <ligand>
        <name>Mg(2+)</name>
        <dbReference type="ChEBI" id="CHEBI:18420"/>
        <label>1</label>
    </ligand>
</feature>
<feature type="binding site" evidence="4">
    <location>
        <position position="368"/>
    </location>
    <ligand>
        <name>L-glutamate</name>
        <dbReference type="ChEBI" id="CHEBI:29985"/>
    </ligand>
</feature>
<feature type="modified residue" description="O-AMP-tyrosine" evidence="4">
    <location>
        <position position="406"/>
    </location>
</feature>
<reference key="1">
    <citation type="journal article" date="2002" name="J. Bacteriol.">
        <title>Whole-genome comparison of Mycobacterium tuberculosis clinical and laboratory strains.</title>
        <authorList>
            <person name="Fleischmann R.D."/>
            <person name="Alland D."/>
            <person name="Eisen J.A."/>
            <person name="Carpenter L."/>
            <person name="White O."/>
            <person name="Peterson J.D."/>
            <person name="DeBoy R.T."/>
            <person name="Dodson R.J."/>
            <person name="Gwinn M.L."/>
            <person name="Haft D.H."/>
            <person name="Hickey E.K."/>
            <person name="Kolonay J.F."/>
            <person name="Nelson W.C."/>
            <person name="Umayam L.A."/>
            <person name="Ermolaeva M.D."/>
            <person name="Salzberg S.L."/>
            <person name="Delcher A."/>
            <person name="Utterback T.R."/>
            <person name="Weidman J.F."/>
            <person name="Khouri H.M."/>
            <person name="Gill J."/>
            <person name="Mikula A."/>
            <person name="Bishai W."/>
            <person name="Jacobs W.R. Jr."/>
            <person name="Venter J.C."/>
            <person name="Fraser C.M."/>
        </authorList>
    </citation>
    <scope>NUCLEOTIDE SEQUENCE [LARGE SCALE GENOMIC DNA]</scope>
    <source>
        <strain>CDC 1551 / Oshkosh</strain>
    </source>
</reference>
<dbReference type="EC" id="6.3.1.2" evidence="4"/>
<dbReference type="EMBL" id="AE000516">
    <property type="protein sequence ID" value="AAK46563.1"/>
    <property type="molecule type" value="Genomic_DNA"/>
</dbReference>
<dbReference type="PIR" id="H70775">
    <property type="entry name" value="H70775"/>
</dbReference>
<dbReference type="RefSeq" id="WP_003411475.1">
    <property type="nucleotide sequence ID" value="NZ_KK341227.1"/>
</dbReference>
<dbReference type="SMR" id="P9WN38"/>
<dbReference type="DrugBank" id="DB04272">
    <property type="generic name" value="Citric acid"/>
</dbReference>
<dbReference type="GeneID" id="45426197"/>
<dbReference type="KEGG" id="mtc:MT2278"/>
<dbReference type="PATRIC" id="fig|83331.31.peg.2452"/>
<dbReference type="HOGENOM" id="CLU_017290_1_2_11"/>
<dbReference type="Proteomes" id="UP000001020">
    <property type="component" value="Chromosome"/>
</dbReference>
<dbReference type="GO" id="GO:0005737">
    <property type="term" value="C:cytoplasm"/>
    <property type="evidence" value="ECO:0007669"/>
    <property type="project" value="UniProtKB-SubCell"/>
</dbReference>
<dbReference type="GO" id="GO:0016020">
    <property type="term" value="C:membrane"/>
    <property type="evidence" value="ECO:0007669"/>
    <property type="project" value="TreeGrafter"/>
</dbReference>
<dbReference type="GO" id="GO:0005524">
    <property type="term" value="F:ATP binding"/>
    <property type="evidence" value="ECO:0007669"/>
    <property type="project" value="UniProtKB-KW"/>
</dbReference>
<dbReference type="GO" id="GO:0004356">
    <property type="term" value="F:glutamine synthetase activity"/>
    <property type="evidence" value="ECO:0007669"/>
    <property type="project" value="UniProtKB-EC"/>
</dbReference>
<dbReference type="GO" id="GO:0046872">
    <property type="term" value="F:metal ion binding"/>
    <property type="evidence" value="ECO:0007669"/>
    <property type="project" value="UniProtKB-KW"/>
</dbReference>
<dbReference type="GO" id="GO:0006542">
    <property type="term" value="P:glutamine biosynthetic process"/>
    <property type="evidence" value="ECO:0007669"/>
    <property type="project" value="InterPro"/>
</dbReference>
<dbReference type="GO" id="GO:0019740">
    <property type="term" value="P:nitrogen utilization"/>
    <property type="evidence" value="ECO:0007669"/>
    <property type="project" value="TreeGrafter"/>
</dbReference>
<dbReference type="FunFam" id="3.10.20.70:FF:000006">
    <property type="entry name" value="Glutamine synthetase"/>
    <property type="match status" value="1"/>
</dbReference>
<dbReference type="FunFam" id="3.30.590.10:FF:000001">
    <property type="entry name" value="Glutamine synthetase"/>
    <property type="match status" value="1"/>
</dbReference>
<dbReference type="Gene3D" id="3.10.20.70">
    <property type="entry name" value="Glutamine synthetase, N-terminal domain"/>
    <property type="match status" value="1"/>
</dbReference>
<dbReference type="Gene3D" id="3.30.590.10">
    <property type="entry name" value="Glutamine synthetase/guanido kinase, catalytic domain"/>
    <property type="match status" value="1"/>
</dbReference>
<dbReference type="InterPro" id="IPR008147">
    <property type="entry name" value="Gln_synt_N"/>
</dbReference>
<dbReference type="InterPro" id="IPR036651">
    <property type="entry name" value="Gln_synt_N_sf"/>
</dbReference>
<dbReference type="InterPro" id="IPR014746">
    <property type="entry name" value="Gln_synth/guanido_kin_cat_dom"/>
</dbReference>
<dbReference type="InterPro" id="IPR008146">
    <property type="entry name" value="Gln_synth_cat_dom"/>
</dbReference>
<dbReference type="InterPro" id="IPR027303">
    <property type="entry name" value="Gln_synth_gly_rich_site"/>
</dbReference>
<dbReference type="InterPro" id="IPR004809">
    <property type="entry name" value="Gln_synth_I"/>
</dbReference>
<dbReference type="InterPro" id="IPR001637">
    <property type="entry name" value="Gln_synth_I_adenylation_site"/>
</dbReference>
<dbReference type="InterPro" id="IPR027302">
    <property type="entry name" value="Gln_synth_N_conserv_site"/>
</dbReference>
<dbReference type="NCBIfam" id="TIGR00653">
    <property type="entry name" value="GlnA"/>
    <property type="match status" value="1"/>
</dbReference>
<dbReference type="PANTHER" id="PTHR43407">
    <property type="entry name" value="GLUTAMINE SYNTHETASE"/>
    <property type="match status" value="1"/>
</dbReference>
<dbReference type="PANTHER" id="PTHR43407:SF1">
    <property type="entry name" value="LENGSIN"/>
    <property type="match status" value="1"/>
</dbReference>
<dbReference type="Pfam" id="PF00120">
    <property type="entry name" value="Gln-synt_C"/>
    <property type="match status" value="1"/>
</dbReference>
<dbReference type="Pfam" id="PF03951">
    <property type="entry name" value="Gln-synt_N"/>
    <property type="match status" value="1"/>
</dbReference>
<dbReference type="SMART" id="SM01230">
    <property type="entry name" value="Gln-synt_C"/>
    <property type="match status" value="1"/>
</dbReference>
<dbReference type="SUPFAM" id="SSF54368">
    <property type="entry name" value="Glutamine synthetase, N-terminal domain"/>
    <property type="match status" value="1"/>
</dbReference>
<dbReference type="SUPFAM" id="SSF55931">
    <property type="entry name" value="Glutamine synthetase/guanido kinase"/>
    <property type="match status" value="1"/>
</dbReference>
<dbReference type="PROSITE" id="PS00180">
    <property type="entry name" value="GLNA_1"/>
    <property type="match status" value="1"/>
</dbReference>
<dbReference type="PROSITE" id="PS00182">
    <property type="entry name" value="GLNA_ADENYLATION"/>
    <property type="match status" value="1"/>
</dbReference>
<dbReference type="PROSITE" id="PS00181">
    <property type="entry name" value="GLNA_ATP"/>
    <property type="match status" value="1"/>
</dbReference>
<dbReference type="PROSITE" id="PS51986">
    <property type="entry name" value="GS_BETA_GRASP"/>
    <property type="match status" value="1"/>
</dbReference>
<dbReference type="PROSITE" id="PS51987">
    <property type="entry name" value="GS_CATALYTIC"/>
    <property type="match status" value="1"/>
</dbReference>
<accession>P9WN38</accession>
<accession>L0TAJ3</accession>
<accession>P0A590</accession>
<accession>Q10377</accession>